<feature type="chain" id="PRO_0000116354" description="Uncharacterized 16.6 kDa protein">
    <location>
        <begin position="1"/>
        <end position="151"/>
    </location>
</feature>
<proteinExistence type="predicted"/>
<reference key="1">
    <citation type="journal article" date="1992" name="Virus Genes">
        <title>Sequence determination and genetic content of an 8.9-kb restriction fragment in the short unique region and the internal inverted repeat of Marek's disease virus type 1 DNA.</title>
        <authorList>
            <person name="Sakaguchi M."/>
            <person name="Urakawa T."/>
            <person name="Hirayama Y."/>
            <person name="Miki N."/>
            <person name="Yamamoto M."/>
            <person name="Hirai K."/>
        </authorList>
    </citation>
    <scope>NUCLEOTIDE SEQUENCE [GENOMIC DNA]</scope>
</reference>
<gene>
    <name type="primary">US453</name>
</gene>
<protein>
    <recommendedName>
        <fullName>Uncharacterized 16.6 kDa protein</fullName>
    </recommendedName>
</protein>
<accession>Q05106</accession>
<name>US453_GAHVG</name>
<sequence length="151" mass="16635">MLESEVSGNAPHSLWIVGAADICRIALECIPLPKRLLAIKVSGTWSGMPWAIPDNIQTLLTSTWEPKFDTPEDRAHFCDSDMVCVYKILGSPPNPLKPPEIEPPQMSSTPGRLFCCGKCCKKEDRDAIAIPVRYTATGKSRIQKKCRAGSH</sequence>
<organism>
    <name type="scientific">Gallid herpesvirus 2 (strain GA)</name>
    <name type="common">GaHV-2</name>
    <name type="synonym">Marek's disease herpesvirus type 1</name>
    <dbReference type="NCBI Taxonomy" id="10388"/>
    <lineage>
        <taxon>Viruses</taxon>
        <taxon>Duplodnaviria</taxon>
        <taxon>Heunggongvirae</taxon>
        <taxon>Peploviricota</taxon>
        <taxon>Herviviricetes</taxon>
        <taxon>Herpesvirales</taxon>
        <taxon>Orthoherpesviridae</taxon>
        <taxon>Alphaherpesvirinae</taxon>
        <taxon>Mardivirus</taxon>
        <taxon>Mardivirus gallidalpha2</taxon>
        <taxon>Gallid alphaherpesvirus 2</taxon>
    </lineage>
</organism>
<dbReference type="EMBL" id="M80595">
    <property type="protein sequence ID" value="AAB59894.1"/>
    <property type="molecule type" value="Genomic_DNA"/>
</dbReference>
<dbReference type="InterPro" id="IPR003485">
    <property type="entry name" value="Herpes_US2_varicellovirus"/>
</dbReference>
<dbReference type="Pfam" id="PF02476">
    <property type="entry name" value="US2"/>
    <property type="match status" value="1"/>
</dbReference>
<organismHost>
    <name type="scientific">Gallus gallus</name>
    <name type="common">Chicken</name>
    <dbReference type="NCBI Taxonomy" id="9031"/>
</organismHost>